<proteinExistence type="evidence at transcript level"/>
<dbReference type="EC" id="1.7.2.-" evidence="1"/>
<dbReference type="EMBL" id="CM000128">
    <property type="protein sequence ID" value="EAY89105.1"/>
    <property type="molecule type" value="Genomic_DNA"/>
</dbReference>
<dbReference type="SMR" id="A2XE45"/>
<dbReference type="STRING" id="39946.A2XE45"/>
<dbReference type="EnsemblPlants" id="BGIOSGA011190-TA">
    <property type="protein sequence ID" value="BGIOSGA011190-PA"/>
    <property type="gene ID" value="BGIOSGA011190"/>
</dbReference>
<dbReference type="Gramene" id="BGIOSGA011190-TA">
    <property type="protein sequence ID" value="BGIOSGA011190-PA"/>
    <property type="gene ID" value="BGIOSGA011190"/>
</dbReference>
<dbReference type="HOGENOM" id="CLU_003827_11_2_1"/>
<dbReference type="OMA" id="HVMYSAK"/>
<dbReference type="Proteomes" id="UP000007015">
    <property type="component" value="Chromosome 3"/>
</dbReference>
<dbReference type="GO" id="GO:0005737">
    <property type="term" value="C:cytoplasm"/>
    <property type="evidence" value="ECO:0000314"/>
    <property type="project" value="UniProtKB"/>
</dbReference>
<dbReference type="GO" id="GO:0005634">
    <property type="term" value="C:nucleus"/>
    <property type="evidence" value="ECO:0000314"/>
    <property type="project" value="UniProtKB"/>
</dbReference>
<dbReference type="GO" id="GO:0020037">
    <property type="term" value="F:heme binding"/>
    <property type="evidence" value="ECO:0007669"/>
    <property type="project" value="InterPro"/>
</dbReference>
<dbReference type="GO" id="GO:0046872">
    <property type="term" value="F:metal ion binding"/>
    <property type="evidence" value="ECO:0007669"/>
    <property type="project" value="UniProtKB-KW"/>
</dbReference>
<dbReference type="GO" id="GO:0016491">
    <property type="term" value="F:oxidoreductase activity"/>
    <property type="evidence" value="ECO:0007669"/>
    <property type="project" value="UniProtKB-KW"/>
</dbReference>
<dbReference type="GO" id="GO:0019825">
    <property type="term" value="F:oxygen binding"/>
    <property type="evidence" value="ECO:0007669"/>
    <property type="project" value="InterPro"/>
</dbReference>
<dbReference type="GO" id="GO:0005344">
    <property type="term" value="F:oxygen carrier activity"/>
    <property type="evidence" value="ECO:0007669"/>
    <property type="project" value="UniProtKB-KW"/>
</dbReference>
<dbReference type="GO" id="GO:0072732">
    <property type="term" value="P:cellular response to calcium ion starvation"/>
    <property type="evidence" value="ECO:0000270"/>
    <property type="project" value="UniProtKB"/>
</dbReference>
<dbReference type="GO" id="GO:0051365">
    <property type="term" value="P:cellular response to potassium ion starvation"/>
    <property type="evidence" value="ECO:0000315"/>
    <property type="project" value="UniProtKB"/>
</dbReference>
<dbReference type="GO" id="GO:0009737">
    <property type="term" value="P:response to abscisic acid"/>
    <property type="evidence" value="ECO:0000270"/>
    <property type="project" value="UniProtKB"/>
</dbReference>
<dbReference type="GO" id="GO:0009409">
    <property type="term" value="P:response to cold"/>
    <property type="evidence" value="ECO:0000270"/>
    <property type="project" value="UniProtKB"/>
</dbReference>
<dbReference type="GO" id="GO:0010167">
    <property type="term" value="P:response to nitrate"/>
    <property type="evidence" value="ECO:0007669"/>
    <property type="project" value="EnsemblPlants"/>
</dbReference>
<dbReference type="GO" id="GO:0071731">
    <property type="term" value="P:response to nitric oxide"/>
    <property type="evidence" value="ECO:0007669"/>
    <property type="project" value="EnsemblPlants"/>
</dbReference>
<dbReference type="GO" id="GO:0080033">
    <property type="term" value="P:response to nitrite"/>
    <property type="evidence" value="ECO:0007669"/>
    <property type="project" value="EnsemblPlants"/>
</dbReference>
<dbReference type="GO" id="GO:0006970">
    <property type="term" value="P:response to osmotic stress"/>
    <property type="evidence" value="ECO:0000270"/>
    <property type="project" value="UniProtKB"/>
</dbReference>
<dbReference type="GO" id="GO:1902074">
    <property type="term" value="P:response to salt"/>
    <property type="evidence" value="ECO:0000270"/>
    <property type="project" value="UniProtKB"/>
</dbReference>
<dbReference type="GO" id="GO:0009414">
    <property type="term" value="P:response to water deprivation"/>
    <property type="evidence" value="ECO:0000270"/>
    <property type="project" value="UniProtKB"/>
</dbReference>
<dbReference type="CDD" id="cd14784">
    <property type="entry name" value="class1_nsHb-like"/>
    <property type="match status" value="1"/>
</dbReference>
<dbReference type="Gene3D" id="1.10.490.10">
    <property type="entry name" value="Globins"/>
    <property type="match status" value="1"/>
</dbReference>
<dbReference type="InterPro" id="IPR000971">
    <property type="entry name" value="Globin"/>
</dbReference>
<dbReference type="InterPro" id="IPR009050">
    <property type="entry name" value="Globin-like_sf"/>
</dbReference>
<dbReference type="InterPro" id="IPR012292">
    <property type="entry name" value="Globin/Proto"/>
</dbReference>
<dbReference type="InterPro" id="IPR001032">
    <property type="entry name" value="Leghaemoglobin-like"/>
</dbReference>
<dbReference type="InterPro" id="IPR019824">
    <property type="entry name" value="Leghaemoglobin_Fe_BS"/>
</dbReference>
<dbReference type="PANTHER" id="PTHR22924">
    <property type="entry name" value="LEGHEMOGLOBIN-RELATED"/>
    <property type="match status" value="1"/>
</dbReference>
<dbReference type="PANTHER" id="PTHR22924:SF98">
    <property type="entry name" value="NON-SYMBIOTIC HEMOGLOBIN 3"/>
    <property type="match status" value="1"/>
</dbReference>
<dbReference type="Pfam" id="PF00042">
    <property type="entry name" value="Globin"/>
    <property type="match status" value="1"/>
</dbReference>
<dbReference type="PRINTS" id="PR00188">
    <property type="entry name" value="PLANTGLOBIN"/>
</dbReference>
<dbReference type="SUPFAM" id="SSF46458">
    <property type="entry name" value="Globin-like"/>
    <property type="match status" value="1"/>
</dbReference>
<dbReference type="PROSITE" id="PS01033">
    <property type="entry name" value="GLOBIN"/>
    <property type="match status" value="1"/>
</dbReference>
<dbReference type="PROSITE" id="PS00208">
    <property type="entry name" value="PLANT_GLOBIN"/>
    <property type="match status" value="1"/>
</dbReference>
<feature type="chain" id="PRO_0000459736" description="Anaerobic nitrite reductase NSHB2">
    <location>
        <begin position="1"/>
        <end position="162"/>
    </location>
</feature>
<feature type="domain" description="Globin" evidence="4">
    <location>
        <begin position="16"/>
        <end position="159"/>
    </location>
</feature>
<feature type="short sequence motif" description="Homodimerization" evidence="1">
    <location>
        <begin position="49"/>
        <end position="53"/>
    </location>
</feature>
<feature type="short sequence motif" description="Homodimerization" evidence="1">
    <location>
        <begin position="112"/>
        <end position="124"/>
    </location>
</feature>
<feature type="binding site" evidence="2">
    <location>
        <position position="59"/>
    </location>
    <ligand>
        <name>heme b</name>
        <dbReference type="ChEBI" id="CHEBI:60344"/>
    </ligand>
</feature>
<feature type="binding site" evidence="1">
    <location>
        <position position="73"/>
    </location>
    <ligand>
        <name>heme b</name>
        <dbReference type="ChEBI" id="CHEBI:60344"/>
    </ligand>
</feature>
<feature type="binding site" description="distal binding residue" evidence="4">
    <location>
        <position position="77"/>
    </location>
    <ligand>
        <name>heme b</name>
        <dbReference type="ChEBI" id="CHEBI:60344"/>
    </ligand>
    <ligandPart>
        <name>Fe</name>
        <dbReference type="ChEBI" id="CHEBI:18248"/>
    </ligandPart>
</feature>
<feature type="binding site" evidence="1">
    <location>
        <position position="100"/>
    </location>
    <ligand>
        <name>heme b</name>
        <dbReference type="ChEBI" id="CHEBI:60344"/>
    </ligand>
</feature>
<feature type="binding site" evidence="1">
    <location>
        <position position="104"/>
    </location>
    <ligand>
        <name>heme b</name>
        <dbReference type="ChEBI" id="CHEBI:60344"/>
    </ligand>
</feature>
<feature type="binding site" description="proximal binding residue" evidence="4">
    <location>
        <position position="105"/>
    </location>
    <ligand>
        <name>heme b</name>
        <dbReference type="ChEBI" id="CHEBI:60344"/>
    </ligand>
    <ligandPart>
        <name>Fe</name>
        <dbReference type="ChEBI" id="CHEBI:18248"/>
    </ligandPart>
</feature>
<feature type="site" description="Homodimerization" evidence="1">
    <location>
        <position position="140"/>
    </location>
</feature>
<comment type="function">
    <text evidence="1 3 5">Phytoglobin that reduces nitrite to nitric oxide under anoxic conditions (e.g. during flooding or in waterlogged soil) (By similarity). May not function as an oxygen storage or transport protein (By similarity). Has an unusually high affinity for O(2) through an hexacoordinate heme iron because of a very low dissociation constant (By similarity). Promotes tolerance to low potassium K(+) conditions (PubMed:29044557).</text>
</comment>
<comment type="catalytic activity">
    <reaction evidence="1">
        <text>Fe(III)-heme b-[protein] + nitric oxide + H2O = Fe(II)-heme b-[protein] + nitrite + 2 H(+)</text>
        <dbReference type="Rhea" id="RHEA:77711"/>
        <dbReference type="Rhea" id="RHEA-COMP:18975"/>
        <dbReference type="Rhea" id="RHEA-COMP:18976"/>
        <dbReference type="ChEBI" id="CHEBI:15377"/>
        <dbReference type="ChEBI" id="CHEBI:15378"/>
        <dbReference type="ChEBI" id="CHEBI:16301"/>
        <dbReference type="ChEBI" id="CHEBI:16480"/>
        <dbReference type="ChEBI" id="CHEBI:55376"/>
        <dbReference type="ChEBI" id="CHEBI:60344"/>
    </reaction>
    <physiologicalReaction direction="right-to-left" evidence="1">
        <dbReference type="Rhea" id="RHEA:77713"/>
    </physiologicalReaction>
</comment>
<comment type="cofactor">
    <cofactor evidence="2">
        <name>heme b</name>
        <dbReference type="ChEBI" id="CHEBI:60344"/>
    </cofactor>
    <text evidence="2">Binds 1 heme group per subunit.</text>
</comment>
<comment type="subunit">
    <text evidence="1">Homodimer.</text>
</comment>
<comment type="subcellular location">
    <subcellularLocation>
        <location evidence="5">Cytoplasm</location>
    </subcellularLocation>
    <subcellularLocation>
        <location evidence="5">Nucleus</location>
    </subcellularLocation>
</comment>
<comment type="tissue specificity">
    <text evidence="5">Mainly expressed in germinating seeds, seedlings, roots, flowers and leaves.</text>
</comment>
<comment type="developmental stage">
    <text evidence="5">In germinating seeds and young seedlings, confined to the upper part of radicles (PubMed:29044557). Later observed in both the cotyledon and elongation part of the root (PubMed:29044557). In inflorescences, slightly expressed in sepals and at the lower part of siliques (PubMed:29044557). Detected in the veins of mature leaves (PubMed:29044557).</text>
</comment>
<comment type="induction">
    <text evidence="5">Accumulates upon salt (NaCL), drought, cold and asbcisic acid (ABA) treatment and in response to osmotic stress (mannitol) (PubMed:29044557). Induced in nutrient deficient conditions (e.g. K(+) and Ca(2+) deprivation), but down-regulated in resupply conditions (PubMed:29044557).</text>
</comment>
<comment type="similarity">
    <text evidence="7">Belongs to the plant globin family.</text>
</comment>
<name>NSHB2_ORYSI</name>
<reference key="1">
    <citation type="journal article" date="2005" name="PLoS Biol.">
        <title>The genomes of Oryza sativa: a history of duplications.</title>
        <authorList>
            <person name="Yu J."/>
            <person name="Wang J."/>
            <person name="Lin W."/>
            <person name="Li S."/>
            <person name="Li H."/>
            <person name="Zhou J."/>
            <person name="Ni P."/>
            <person name="Dong W."/>
            <person name="Hu S."/>
            <person name="Zeng C."/>
            <person name="Zhang J."/>
            <person name="Zhang Y."/>
            <person name="Li R."/>
            <person name="Xu Z."/>
            <person name="Li S."/>
            <person name="Li X."/>
            <person name="Zheng H."/>
            <person name="Cong L."/>
            <person name="Lin L."/>
            <person name="Yin J."/>
            <person name="Geng J."/>
            <person name="Li G."/>
            <person name="Shi J."/>
            <person name="Liu J."/>
            <person name="Lv H."/>
            <person name="Li J."/>
            <person name="Wang J."/>
            <person name="Deng Y."/>
            <person name="Ran L."/>
            <person name="Shi X."/>
            <person name="Wang X."/>
            <person name="Wu Q."/>
            <person name="Li C."/>
            <person name="Ren X."/>
            <person name="Wang J."/>
            <person name="Wang X."/>
            <person name="Li D."/>
            <person name="Liu D."/>
            <person name="Zhang X."/>
            <person name="Ji Z."/>
            <person name="Zhao W."/>
            <person name="Sun Y."/>
            <person name="Zhang Z."/>
            <person name="Bao J."/>
            <person name="Han Y."/>
            <person name="Dong L."/>
            <person name="Ji J."/>
            <person name="Chen P."/>
            <person name="Wu S."/>
            <person name="Liu J."/>
            <person name="Xiao Y."/>
            <person name="Bu D."/>
            <person name="Tan J."/>
            <person name="Yang L."/>
            <person name="Ye C."/>
            <person name="Zhang J."/>
            <person name="Xu J."/>
            <person name="Zhou Y."/>
            <person name="Yu Y."/>
            <person name="Zhang B."/>
            <person name="Zhuang S."/>
            <person name="Wei H."/>
            <person name="Liu B."/>
            <person name="Lei M."/>
            <person name="Yu H."/>
            <person name="Li Y."/>
            <person name="Xu H."/>
            <person name="Wei S."/>
            <person name="He X."/>
            <person name="Fang L."/>
            <person name="Zhang Z."/>
            <person name="Zhang Y."/>
            <person name="Huang X."/>
            <person name="Su Z."/>
            <person name="Tong W."/>
            <person name="Li J."/>
            <person name="Tong Z."/>
            <person name="Li S."/>
            <person name="Ye J."/>
            <person name="Wang L."/>
            <person name="Fang L."/>
            <person name="Lei T."/>
            <person name="Chen C.-S."/>
            <person name="Chen H.-C."/>
            <person name="Xu Z."/>
            <person name="Li H."/>
            <person name="Huang H."/>
            <person name="Zhang F."/>
            <person name="Xu H."/>
            <person name="Li N."/>
            <person name="Zhao C."/>
            <person name="Li S."/>
            <person name="Dong L."/>
            <person name="Huang Y."/>
            <person name="Li L."/>
            <person name="Xi Y."/>
            <person name="Qi Q."/>
            <person name="Li W."/>
            <person name="Zhang B."/>
            <person name="Hu W."/>
            <person name="Zhang Y."/>
            <person name="Tian X."/>
            <person name="Jiao Y."/>
            <person name="Liang X."/>
            <person name="Jin J."/>
            <person name="Gao L."/>
            <person name="Zheng W."/>
            <person name="Hao B."/>
            <person name="Liu S.-M."/>
            <person name="Wang W."/>
            <person name="Yuan L."/>
            <person name="Cao M."/>
            <person name="McDermott J."/>
            <person name="Samudrala R."/>
            <person name="Wang J."/>
            <person name="Wong G.K.-S."/>
            <person name="Yang H."/>
        </authorList>
    </citation>
    <scope>NUCLEOTIDE SEQUENCE [LARGE SCALE GENOMIC DNA]</scope>
    <source>
        <strain>cv. 93-11</strain>
    </source>
</reference>
<reference key="2">
    <citation type="journal article" date="2018" name="Plant Cell Environ.">
        <title>Rice phytoglobins regulate responses under low mineral nutrients and abiotic stresses in Arabidopsis thaliana.</title>
        <authorList>
            <person name="Shankar A."/>
            <person name="Fernandes J.L."/>
            <person name="Kaur K."/>
            <person name="Sharma M."/>
            <person name="Kundu S."/>
            <person name="Pandey G.K."/>
        </authorList>
    </citation>
    <scope>GENE FAMILY</scope>
    <scope>NOMENCLATURE</scope>
    <scope>FUNCTION</scope>
    <scope>INDUCTION BY POTASSIUM; CALCIUM; SALT; DROUGHT; COLD AND ASBCISIC ACID</scope>
    <scope>SUBCELLULAR LOCATION</scope>
    <scope>TISSUE SPECIFICITY</scope>
    <scope>DEVELOPMENTAL STAGE</scope>
    <source>
        <strain>cv. IR64</strain>
    </source>
</reference>
<organism>
    <name type="scientific">Oryza sativa subsp. indica</name>
    <name type="common">Rice</name>
    <dbReference type="NCBI Taxonomy" id="39946"/>
    <lineage>
        <taxon>Eukaryota</taxon>
        <taxon>Viridiplantae</taxon>
        <taxon>Streptophyta</taxon>
        <taxon>Embryophyta</taxon>
        <taxon>Tracheophyta</taxon>
        <taxon>Spermatophyta</taxon>
        <taxon>Magnoliopsida</taxon>
        <taxon>Liliopsida</taxon>
        <taxon>Poales</taxon>
        <taxon>Poaceae</taxon>
        <taxon>BOP clade</taxon>
        <taxon>Oryzoideae</taxon>
        <taxon>Oryzeae</taxon>
        <taxon>Oryzinae</taxon>
        <taxon>Oryza</taxon>
        <taxon>Oryza sativa</taxon>
    </lineage>
</organism>
<accession>A2XE45</accession>
<evidence type="ECO:0000250" key="1">
    <source>
        <dbReference type="UniProtKB" id="O04986"/>
    </source>
</evidence>
<evidence type="ECO:0000250" key="2">
    <source>
        <dbReference type="UniProtKB" id="P68168"/>
    </source>
</evidence>
<evidence type="ECO:0000250" key="3">
    <source>
        <dbReference type="UniProtKB" id="Q42831"/>
    </source>
</evidence>
<evidence type="ECO:0000255" key="4">
    <source>
        <dbReference type="PROSITE-ProRule" id="PRU00238"/>
    </source>
</evidence>
<evidence type="ECO:0000269" key="5">
    <source>
    </source>
</evidence>
<evidence type="ECO:0000303" key="6">
    <source>
    </source>
</evidence>
<evidence type="ECO:0000305" key="7"/>
<evidence type="ECO:0000312" key="8">
    <source>
        <dbReference type="EMBL" id="EAY89105.1"/>
    </source>
</evidence>
<sequence length="162" mass="17941">MALVEGNNGVSGGAVSFSEEQEALVLKSWAIMKKDSANIGLRFFLKIFEVAPSASQMFSFLRNSDVPLEKNPKLKTHAMSVFVMLRKAGKVTVRDTTLKRLGATHFKYGVGDAHFEVTRFALLETIKEAVPVDMWSPAMKSAWSEAYNQLVAAIKQEMKPAE</sequence>
<protein>
    <recommendedName>
        <fullName evidence="7">Anaerobic nitrite reductase NSHB2</fullName>
        <ecNumber evidence="1">1.7.2.-</ecNumber>
    </recommendedName>
    <alternativeName>
        <fullName evidence="7">Non-symbiotic hemoglobin 2</fullName>
        <shortName evidence="7">OsNSHB2</shortName>
        <shortName evidence="7">nsHb2-1</shortName>
        <shortName evidence="7">rHb2</shortName>
    </alternativeName>
    <alternativeName>
        <fullName evidence="7">ORYsa GLB1b</fullName>
    </alternativeName>
    <alternativeName>
        <fullName evidence="6">Phytoglobin 1.2</fullName>
        <shortName evidence="6">OsPgb1.2</shortName>
        <shortName evidence="6">Phytogb1.2</shortName>
    </alternativeName>
</protein>
<gene>
    <name evidence="7" type="primary">NSHB2</name>
    <name evidence="7" type="synonym">GLB1B</name>
    <name evidence="7" type="synonym">HB2</name>
    <name evidence="7" type="synonym">Hb2-1</name>
    <name evidence="6" type="synonym">Pgb1.2</name>
    <name evidence="8" type="ORF">OsI_10593</name>
</gene>
<keyword id="KW-0963">Cytoplasm</keyword>
<keyword id="KW-0349">Heme</keyword>
<keyword id="KW-0408">Iron</keyword>
<keyword id="KW-0479">Metal-binding</keyword>
<keyword id="KW-0539">Nucleus</keyword>
<keyword id="KW-0560">Oxidoreductase</keyword>
<keyword id="KW-0561">Oxygen transport</keyword>
<keyword id="KW-1185">Reference proteome</keyword>
<keyword id="KW-0346">Stress response</keyword>
<keyword id="KW-0813">Transport</keyword>